<proteinExistence type="inferred from homology"/>
<reference key="1">
    <citation type="journal article" date="2008" name="J. Bacteriol.">
        <title>The complete genome sequence of Actinobacillus pleuropneumoniae L20 (serotype 5b).</title>
        <authorList>
            <person name="Foote S.J."/>
            <person name="Bosse J.T."/>
            <person name="Bouevitch A.B."/>
            <person name="Langford P.R."/>
            <person name="Young N.M."/>
            <person name="Nash J.H.E."/>
        </authorList>
    </citation>
    <scope>NUCLEOTIDE SEQUENCE [LARGE SCALE GENOMIC DNA]</scope>
    <source>
        <strain>L20</strain>
    </source>
</reference>
<accession>A3MZ98</accession>
<sequence>MNFDVVIIGGGLAGLTCGIALQEQGKRCVIINNGQAAIDFSSGSMDLLSRLPSGQKVENVYQSLDELKLQAPEHPYSILGKDQVLAKAQQFEQLAQSLNLHLEGSTVQNHERITPLGGLRATWLSPNSVPTVKHLTALADKQVAILGIEGYHDFQPQLLADNLKQHSQFADYEFTIGYLNIPELDYLRQNSREFRSVNIAQLLEHKLSFQDLVQEIKQAAGNAKAVFLPACFGLDNQDFFNSLQQATGLALFELPTLPPSLLGIRQHRQLRSRFEQLGGMMMNGDRAVKAEFEGKNVARIFTTSHQEEPISADYFVLAAGSFFSNGLVAEFERVKEPVFDLDICGCKNFDSSDRFTWTNNRFAAPQPYQSAGVVINSACQVQKNGEVVSNLYAVGNVIGGFQGIEQGCGSGVAVVTALTVAEQIGGTK</sequence>
<comment type="function">
    <text evidence="1">Conversion of glycerol 3-phosphate to dihydroxyacetone. Uses fumarate or nitrate as electron acceptor.</text>
</comment>
<comment type="catalytic activity">
    <reaction evidence="1">
        <text>a quinone + sn-glycerol 3-phosphate = dihydroxyacetone phosphate + a quinol</text>
        <dbReference type="Rhea" id="RHEA:18977"/>
        <dbReference type="ChEBI" id="CHEBI:24646"/>
        <dbReference type="ChEBI" id="CHEBI:57597"/>
        <dbReference type="ChEBI" id="CHEBI:57642"/>
        <dbReference type="ChEBI" id="CHEBI:132124"/>
        <dbReference type="EC" id="1.1.5.3"/>
    </reaction>
</comment>
<comment type="cofactor">
    <cofactor evidence="1">
        <name>FMN</name>
        <dbReference type="ChEBI" id="CHEBI:58210"/>
    </cofactor>
</comment>
<comment type="pathway">
    <text evidence="1">Polyol metabolism; glycerol degradation via glycerol kinase pathway; glycerone phosphate from sn-glycerol 3-phosphate (anaerobic route): step 1/1.</text>
</comment>
<comment type="subunit">
    <text evidence="1">Composed of a catalytic GlpA/B dimer and of membrane bound GlpC.</text>
</comment>
<comment type="similarity">
    <text evidence="1">Belongs to the anaerobic G-3-P dehydrogenase subunit B family.</text>
</comment>
<organism>
    <name type="scientific">Actinobacillus pleuropneumoniae serotype 5b (strain L20)</name>
    <dbReference type="NCBI Taxonomy" id="416269"/>
    <lineage>
        <taxon>Bacteria</taxon>
        <taxon>Pseudomonadati</taxon>
        <taxon>Pseudomonadota</taxon>
        <taxon>Gammaproteobacteria</taxon>
        <taxon>Pasteurellales</taxon>
        <taxon>Pasteurellaceae</taxon>
        <taxon>Actinobacillus</taxon>
    </lineage>
</organism>
<keyword id="KW-0285">Flavoprotein</keyword>
<keyword id="KW-0288">FMN</keyword>
<keyword id="KW-0560">Oxidoreductase</keyword>
<keyword id="KW-1185">Reference proteome</keyword>
<evidence type="ECO:0000255" key="1">
    <source>
        <dbReference type="HAMAP-Rule" id="MF_00753"/>
    </source>
</evidence>
<gene>
    <name evidence="1" type="primary">glpB</name>
    <name type="ordered locus">APL_0380</name>
</gene>
<name>GLPB_ACTP2</name>
<protein>
    <recommendedName>
        <fullName evidence="1">Anaerobic glycerol-3-phosphate dehydrogenase subunit B</fullName>
        <shortName evidence="1">Anaerobic G-3-P dehydrogenase subunit B</shortName>
        <shortName evidence="1">Anaerobic G3Pdhase B</shortName>
        <ecNumber evidence="1">1.1.5.3</ecNumber>
    </recommendedName>
</protein>
<dbReference type="EC" id="1.1.5.3" evidence="1"/>
<dbReference type="EMBL" id="CP000569">
    <property type="protein sequence ID" value="ABN73484.1"/>
    <property type="molecule type" value="Genomic_DNA"/>
</dbReference>
<dbReference type="RefSeq" id="WP_005611546.1">
    <property type="nucleotide sequence ID" value="NC_009053.1"/>
</dbReference>
<dbReference type="STRING" id="416269.APL_0380"/>
<dbReference type="EnsemblBacteria" id="ABN73484">
    <property type="protein sequence ID" value="ABN73484"/>
    <property type="gene ID" value="APL_0380"/>
</dbReference>
<dbReference type="KEGG" id="apl:APL_0380"/>
<dbReference type="eggNOG" id="COG3075">
    <property type="taxonomic scope" value="Bacteria"/>
</dbReference>
<dbReference type="HOGENOM" id="CLU_047793_0_0_6"/>
<dbReference type="UniPathway" id="UPA00618">
    <property type="reaction ID" value="UER00673"/>
</dbReference>
<dbReference type="Proteomes" id="UP000001432">
    <property type="component" value="Chromosome"/>
</dbReference>
<dbReference type="GO" id="GO:0009331">
    <property type="term" value="C:glycerol-3-phosphate dehydrogenase (FAD) complex"/>
    <property type="evidence" value="ECO:0007669"/>
    <property type="project" value="InterPro"/>
</dbReference>
<dbReference type="GO" id="GO:0004368">
    <property type="term" value="F:glycerol-3-phosphate dehydrogenase (quinone) activity"/>
    <property type="evidence" value="ECO:0007669"/>
    <property type="project" value="UniProtKB-UniRule"/>
</dbReference>
<dbReference type="GO" id="GO:0019563">
    <property type="term" value="P:glycerol catabolic process"/>
    <property type="evidence" value="ECO:0007669"/>
    <property type="project" value="UniProtKB-UniRule"/>
</dbReference>
<dbReference type="Gene3D" id="3.50.50.60">
    <property type="entry name" value="FAD/NAD(P)-binding domain"/>
    <property type="match status" value="2"/>
</dbReference>
<dbReference type="HAMAP" id="MF_00753">
    <property type="entry name" value="Glycerol3P_GlpB"/>
    <property type="match status" value="1"/>
</dbReference>
<dbReference type="InterPro" id="IPR003953">
    <property type="entry name" value="FAD-dep_OxRdtase_2_FAD-bd"/>
</dbReference>
<dbReference type="InterPro" id="IPR050315">
    <property type="entry name" value="FAD-oxidoreductase_2"/>
</dbReference>
<dbReference type="InterPro" id="IPR036188">
    <property type="entry name" value="FAD/NAD-bd_sf"/>
</dbReference>
<dbReference type="InterPro" id="IPR009158">
    <property type="entry name" value="G3P_DH_GlpB_su"/>
</dbReference>
<dbReference type="NCBIfam" id="TIGR03378">
    <property type="entry name" value="glycerol3P_GlpB"/>
    <property type="match status" value="1"/>
</dbReference>
<dbReference type="NCBIfam" id="NF003718">
    <property type="entry name" value="PRK05329.1-1"/>
    <property type="match status" value="1"/>
</dbReference>
<dbReference type="NCBIfam" id="NF003719">
    <property type="entry name" value="PRK05329.1-2"/>
    <property type="match status" value="1"/>
</dbReference>
<dbReference type="NCBIfam" id="NF003720">
    <property type="entry name" value="PRK05329.1-3"/>
    <property type="match status" value="1"/>
</dbReference>
<dbReference type="NCBIfam" id="NF003721">
    <property type="entry name" value="PRK05329.1-4"/>
    <property type="match status" value="1"/>
</dbReference>
<dbReference type="PANTHER" id="PTHR43400:SF11">
    <property type="entry name" value="ANAEROBIC GLYCEROL-3-PHOSPHATE DEHYDROGENASE SUBUNIT B"/>
    <property type="match status" value="1"/>
</dbReference>
<dbReference type="PANTHER" id="PTHR43400">
    <property type="entry name" value="FUMARATE REDUCTASE"/>
    <property type="match status" value="1"/>
</dbReference>
<dbReference type="Pfam" id="PF00890">
    <property type="entry name" value="FAD_binding_2"/>
    <property type="match status" value="1"/>
</dbReference>
<dbReference type="PIRSF" id="PIRSF000141">
    <property type="entry name" value="Anaerobic_G3P_dh"/>
    <property type="match status" value="1"/>
</dbReference>
<dbReference type="SUPFAM" id="SSF51905">
    <property type="entry name" value="FAD/NAD(P)-binding domain"/>
    <property type="match status" value="1"/>
</dbReference>
<feature type="chain" id="PRO_1000046601" description="Anaerobic glycerol-3-phosphate dehydrogenase subunit B">
    <location>
        <begin position="1"/>
        <end position="428"/>
    </location>
</feature>